<name>MRAY_RICFE</name>
<reference key="1">
    <citation type="journal article" date="2005" name="PLoS Biol.">
        <title>The genome sequence of Rickettsia felis identifies the first putative conjugative plasmid in an obligate intracellular parasite.</title>
        <authorList>
            <person name="Ogata H."/>
            <person name="Renesto P."/>
            <person name="Audic S."/>
            <person name="Robert C."/>
            <person name="Blanc G."/>
            <person name="Fournier P.-E."/>
            <person name="Parinello H."/>
            <person name="Claverie J.-M."/>
            <person name="Raoult D."/>
        </authorList>
    </citation>
    <scope>NUCLEOTIDE SEQUENCE [LARGE SCALE GENOMIC DNA]</scope>
    <source>
        <strain>ATCC VR-1525 / URRWXCal2</strain>
    </source>
</reference>
<keyword id="KW-0131">Cell cycle</keyword>
<keyword id="KW-0132">Cell division</keyword>
<keyword id="KW-0997">Cell inner membrane</keyword>
<keyword id="KW-1003">Cell membrane</keyword>
<keyword id="KW-0133">Cell shape</keyword>
<keyword id="KW-0961">Cell wall biogenesis/degradation</keyword>
<keyword id="KW-0460">Magnesium</keyword>
<keyword id="KW-0472">Membrane</keyword>
<keyword id="KW-0479">Metal-binding</keyword>
<keyword id="KW-0573">Peptidoglycan synthesis</keyword>
<keyword id="KW-0808">Transferase</keyword>
<keyword id="KW-0812">Transmembrane</keyword>
<keyword id="KW-1133">Transmembrane helix</keyword>
<feature type="chain" id="PRO_0000235477" description="Phospho-N-acetylmuramoyl-pentapeptide-transferase">
    <location>
        <begin position="1"/>
        <end position="361"/>
    </location>
</feature>
<feature type="transmembrane region" description="Helical" evidence="1">
    <location>
        <begin position="28"/>
        <end position="48"/>
    </location>
</feature>
<feature type="transmembrane region" description="Helical" evidence="1">
    <location>
        <begin position="74"/>
        <end position="94"/>
    </location>
</feature>
<feature type="transmembrane region" description="Helical" evidence="1">
    <location>
        <begin position="99"/>
        <end position="119"/>
    </location>
</feature>
<feature type="transmembrane region" description="Helical" evidence="1">
    <location>
        <begin position="133"/>
        <end position="153"/>
    </location>
</feature>
<feature type="transmembrane region" description="Helical" evidence="1">
    <location>
        <begin position="168"/>
        <end position="188"/>
    </location>
</feature>
<feature type="transmembrane region" description="Helical" evidence="1">
    <location>
        <begin position="203"/>
        <end position="223"/>
    </location>
</feature>
<feature type="transmembrane region" description="Helical" evidence="1">
    <location>
        <begin position="236"/>
        <end position="256"/>
    </location>
</feature>
<feature type="transmembrane region" description="Helical" evidence="1">
    <location>
        <begin position="263"/>
        <end position="283"/>
    </location>
</feature>
<feature type="transmembrane region" description="Helical" evidence="1">
    <location>
        <begin position="288"/>
        <end position="308"/>
    </location>
</feature>
<feature type="transmembrane region" description="Helical" evidence="1">
    <location>
        <begin position="338"/>
        <end position="358"/>
    </location>
</feature>
<evidence type="ECO:0000255" key="1">
    <source>
        <dbReference type="HAMAP-Rule" id="MF_00038"/>
    </source>
</evidence>
<proteinExistence type="inferred from homology"/>
<organism>
    <name type="scientific">Rickettsia felis (strain ATCC VR-1525 / URRWXCal2)</name>
    <name type="common">Rickettsia azadi</name>
    <dbReference type="NCBI Taxonomy" id="315456"/>
    <lineage>
        <taxon>Bacteria</taxon>
        <taxon>Pseudomonadati</taxon>
        <taxon>Pseudomonadota</taxon>
        <taxon>Alphaproteobacteria</taxon>
        <taxon>Rickettsiales</taxon>
        <taxon>Rickettsiaceae</taxon>
        <taxon>Rickettsieae</taxon>
        <taxon>Rickettsia</taxon>
        <taxon>spotted fever group</taxon>
    </lineage>
</organism>
<accession>Q4UMI7</accession>
<dbReference type="EC" id="2.7.8.13" evidence="1"/>
<dbReference type="EMBL" id="CP000053">
    <property type="protein sequence ID" value="AAY61221.1"/>
    <property type="molecule type" value="Genomic_DNA"/>
</dbReference>
<dbReference type="SMR" id="Q4UMI7"/>
<dbReference type="STRING" id="315456.RF_0370"/>
<dbReference type="KEGG" id="rfe:RF_0370"/>
<dbReference type="eggNOG" id="COG0472">
    <property type="taxonomic scope" value="Bacteria"/>
</dbReference>
<dbReference type="HOGENOM" id="CLU_023982_0_0_5"/>
<dbReference type="OrthoDB" id="9805475at2"/>
<dbReference type="UniPathway" id="UPA00219"/>
<dbReference type="Proteomes" id="UP000008548">
    <property type="component" value="Chromosome"/>
</dbReference>
<dbReference type="GO" id="GO:0005886">
    <property type="term" value="C:plasma membrane"/>
    <property type="evidence" value="ECO:0007669"/>
    <property type="project" value="UniProtKB-SubCell"/>
</dbReference>
<dbReference type="GO" id="GO:0046872">
    <property type="term" value="F:metal ion binding"/>
    <property type="evidence" value="ECO:0007669"/>
    <property type="project" value="UniProtKB-KW"/>
</dbReference>
<dbReference type="GO" id="GO:0008963">
    <property type="term" value="F:phospho-N-acetylmuramoyl-pentapeptide-transferase activity"/>
    <property type="evidence" value="ECO:0007669"/>
    <property type="project" value="UniProtKB-UniRule"/>
</dbReference>
<dbReference type="GO" id="GO:0051992">
    <property type="term" value="F:UDP-N-acetylmuramoyl-L-alanyl-D-glutamyl-meso-2,6-diaminopimelyl-D-alanyl-D-alanine:undecaprenyl-phosphate transferase activity"/>
    <property type="evidence" value="ECO:0007669"/>
    <property type="project" value="RHEA"/>
</dbReference>
<dbReference type="GO" id="GO:0051301">
    <property type="term" value="P:cell division"/>
    <property type="evidence" value="ECO:0007669"/>
    <property type="project" value="UniProtKB-KW"/>
</dbReference>
<dbReference type="GO" id="GO:0071555">
    <property type="term" value="P:cell wall organization"/>
    <property type="evidence" value="ECO:0007669"/>
    <property type="project" value="UniProtKB-KW"/>
</dbReference>
<dbReference type="GO" id="GO:0009252">
    <property type="term" value="P:peptidoglycan biosynthetic process"/>
    <property type="evidence" value="ECO:0007669"/>
    <property type="project" value="UniProtKB-UniRule"/>
</dbReference>
<dbReference type="GO" id="GO:0008360">
    <property type="term" value="P:regulation of cell shape"/>
    <property type="evidence" value="ECO:0007669"/>
    <property type="project" value="UniProtKB-KW"/>
</dbReference>
<dbReference type="CDD" id="cd06852">
    <property type="entry name" value="GT_MraY"/>
    <property type="match status" value="1"/>
</dbReference>
<dbReference type="HAMAP" id="MF_00038">
    <property type="entry name" value="MraY"/>
    <property type="match status" value="1"/>
</dbReference>
<dbReference type="InterPro" id="IPR000715">
    <property type="entry name" value="Glycosyl_transferase_4"/>
</dbReference>
<dbReference type="InterPro" id="IPR003524">
    <property type="entry name" value="PNAcMuramoyl-5peptid_Trfase"/>
</dbReference>
<dbReference type="InterPro" id="IPR018480">
    <property type="entry name" value="PNAcMuramoyl-5peptid_Trfase_CS"/>
</dbReference>
<dbReference type="NCBIfam" id="TIGR00445">
    <property type="entry name" value="mraY"/>
    <property type="match status" value="1"/>
</dbReference>
<dbReference type="PANTHER" id="PTHR22926">
    <property type="entry name" value="PHOSPHO-N-ACETYLMURAMOYL-PENTAPEPTIDE-TRANSFERASE"/>
    <property type="match status" value="1"/>
</dbReference>
<dbReference type="PANTHER" id="PTHR22926:SF5">
    <property type="entry name" value="PHOSPHO-N-ACETYLMURAMOYL-PENTAPEPTIDE-TRANSFERASE HOMOLOG"/>
    <property type="match status" value="1"/>
</dbReference>
<dbReference type="Pfam" id="PF00953">
    <property type="entry name" value="Glycos_transf_4"/>
    <property type="match status" value="1"/>
</dbReference>
<dbReference type="Pfam" id="PF10555">
    <property type="entry name" value="MraY_sig1"/>
    <property type="match status" value="1"/>
</dbReference>
<dbReference type="PROSITE" id="PS01347">
    <property type="entry name" value="MRAY_1"/>
    <property type="match status" value="1"/>
</dbReference>
<dbReference type="PROSITE" id="PS01348">
    <property type="entry name" value="MRAY_2"/>
    <property type="match status" value="1"/>
</dbReference>
<comment type="function">
    <text evidence="1">Catalyzes the initial step of the lipid cycle reactions in the biosynthesis of the cell wall peptidoglycan: transfers peptidoglycan precursor phospho-MurNAc-pentapeptide from UDP-MurNAc-pentapeptide onto the lipid carrier undecaprenyl phosphate, yielding undecaprenyl-pyrophosphoryl-MurNAc-pentapeptide, known as lipid I.</text>
</comment>
<comment type="catalytic activity">
    <reaction evidence="1">
        <text>UDP-N-acetyl-alpha-D-muramoyl-L-alanyl-gamma-D-glutamyl-meso-2,6-diaminopimeloyl-D-alanyl-D-alanine + di-trans,octa-cis-undecaprenyl phosphate = di-trans,octa-cis-undecaprenyl diphospho-N-acetyl-alpha-D-muramoyl-L-alanyl-D-glutamyl-meso-2,6-diaminopimeloyl-D-alanyl-D-alanine + UMP</text>
        <dbReference type="Rhea" id="RHEA:28386"/>
        <dbReference type="ChEBI" id="CHEBI:57865"/>
        <dbReference type="ChEBI" id="CHEBI:60392"/>
        <dbReference type="ChEBI" id="CHEBI:61386"/>
        <dbReference type="ChEBI" id="CHEBI:61387"/>
        <dbReference type="EC" id="2.7.8.13"/>
    </reaction>
</comment>
<comment type="cofactor">
    <cofactor evidence="1">
        <name>Mg(2+)</name>
        <dbReference type="ChEBI" id="CHEBI:18420"/>
    </cofactor>
</comment>
<comment type="pathway">
    <text evidence="1">Cell wall biogenesis; peptidoglycan biosynthesis.</text>
</comment>
<comment type="subcellular location">
    <subcellularLocation>
        <location evidence="1">Cell inner membrane</location>
        <topology evidence="1">Multi-pass membrane protein</topology>
    </subcellularLocation>
</comment>
<comment type="similarity">
    <text evidence="1">Belongs to the glycosyltransferase 4 family. MraY subfamily.</text>
</comment>
<sequence>MLYNLLLPHIHNSHIANLFHYITFRSGLAIIITLSLSFITGPILIKFLRSLQKNGQPIRSDGPESHQTKAGTPTMGGIMIILSSCLSTLLLADLTNKYIWITLFGFISFGIIGFMDDYAKVTKNNHYGVRGKSKLLLQGIISLIICILLEYLDKNPSHLLNVPFFKNLSLDLGYFYIVFAIFVIVGSSNAVNLTDGLDGLATVPIAFTAGSFALISYLVGNLIYSNYLQLTYIPNTGELTVLCAGLVGSCLGFLWFNAQPAEVFMGDTGSLSLGGVLGIISVITKHEIVLAIVGGLFVIETASVILQVYYFKATKGKRIFKMAPLHHHFEKHGWAESKVVIRFWIISVIFALIGLSSLKLR</sequence>
<gene>
    <name evidence="1" type="primary">mraY</name>
    <name type="ordered locus">RF_0370</name>
</gene>
<protein>
    <recommendedName>
        <fullName evidence="1">Phospho-N-acetylmuramoyl-pentapeptide-transferase</fullName>
        <ecNumber evidence="1">2.7.8.13</ecNumber>
    </recommendedName>
    <alternativeName>
        <fullName evidence="1">UDP-MurNAc-pentapeptide phosphotransferase</fullName>
    </alternativeName>
</protein>